<gene>
    <name type="primary">pdxJ</name>
    <name type="ordered locus">b2564</name>
    <name type="ordered locus">JW2548</name>
</gene>
<accession>P0A794</accession>
<accession>P24223</accession>
<accession>Q2MAG6</accession>
<proteinExistence type="evidence at protein level"/>
<protein>
    <recommendedName>
        <fullName>Pyridoxine 5'-phosphate synthase</fullName>
        <shortName>PNP synthase</shortName>
        <ecNumber evidence="1">2.6.99.2</ecNumber>
    </recommendedName>
</protein>
<keyword id="KW-0002">3D-structure</keyword>
<keyword id="KW-0963">Cytoplasm</keyword>
<keyword id="KW-0903">Direct protein sequencing</keyword>
<keyword id="KW-0664">Pyridoxine biosynthesis</keyword>
<keyword id="KW-1185">Reference proteome</keyword>
<keyword id="KW-0808">Transferase</keyword>
<feature type="initiator methionine" description="Removed">
    <location>
        <position position="1"/>
    </location>
</feature>
<feature type="chain" id="PRO_0000190114" description="Pyridoxine 5'-phosphate synthase">
    <location>
        <begin position="2"/>
        <end position="243"/>
    </location>
</feature>
<feature type="active site" description="Proton acceptor">
    <location>
        <position position="45"/>
    </location>
</feature>
<feature type="active site" description="Proton acceptor">
    <location>
        <position position="72"/>
    </location>
</feature>
<feature type="active site" description="Proton donor">
    <location>
        <position position="193"/>
    </location>
</feature>
<feature type="binding site">
    <location>
        <position position="9"/>
    </location>
    <ligand>
        <name>3-amino-2-oxopropyl phosphate</name>
        <dbReference type="ChEBI" id="CHEBI:57279"/>
    </ligand>
</feature>
<feature type="binding site">
    <location>
        <begin position="11"/>
        <end position="12"/>
    </location>
    <ligand>
        <name>1-deoxy-D-xylulose 5-phosphate</name>
        <dbReference type="ChEBI" id="CHEBI:57792"/>
    </ligand>
</feature>
<feature type="binding site">
    <location>
        <position position="20"/>
    </location>
    <ligand>
        <name>3-amino-2-oxopropyl phosphate</name>
        <dbReference type="ChEBI" id="CHEBI:57279"/>
    </ligand>
</feature>
<feature type="binding site">
    <location>
        <position position="47"/>
    </location>
    <ligand>
        <name>1-deoxy-D-xylulose 5-phosphate</name>
        <dbReference type="ChEBI" id="CHEBI:57792"/>
    </ligand>
</feature>
<feature type="binding site">
    <location>
        <position position="52"/>
    </location>
    <ligand>
        <name>1-deoxy-D-xylulose 5-phosphate</name>
        <dbReference type="ChEBI" id="CHEBI:57792"/>
    </ligand>
</feature>
<feature type="binding site">
    <location>
        <position position="102"/>
    </location>
    <ligand>
        <name>1-deoxy-D-xylulose 5-phosphate</name>
        <dbReference type="ChEBI" id="CHEBI:57792"/>
    </ligand>
</feature>
<feature type="binding site">
    <location>
        <position position="194"/>
    </location>
    <ligand>
        <name>3-amino-2-oxopropyl phosphate</name>
        <dbReference type="ChEBI" id="CHEBI:57279"/>
    </ligand>
</feature>
<feature type="binding site">
    <location>
        <begin position="215"/>
        <end position="216"/>
    </location>
    <ligand>
        <name>3-amino-2-oxopropyl phosphate</name>
        <dbReference type="ChEBI" id="CHEBI:57279"/>
    </ligand>
</feature>
<feature type="site" description="Transition state stabilizer">
    <location>
        <position position="153"/>
    </location>
</feature>
<feature type="sequence variant" description="In pdxH null mutation suppressor." evidence="4">
    <original>G</original>
    <variation>S</variation>
    <location>
        <position position="194"/>
    </location>
</feature>
<feature type="strand" evidence="9">
    <location>
        <begin position="5"/>
        <end position="9"/>
    </location>
</feature>
<feature type="helix" evidence="9">
    <location>
        <begin position="11"/>
        <end position="18"/>
    </location>
</feature>
<feature type="strand" evidence="7">
    <location>
        <begin position="20"/>
        <end position="22"/>
    </location>
</feature>
<feature type="helix" evidence="9">
    <location>
        <begin position="27"/>
        <end position="35"/>
    </location>
</feature>
<feature type="turn" evidence="9">
    <location>
        <begin position="36"/>
        <end position="38"/>
    </location>
</feature>
<feature type="strand" evidence="9">
    <location>
        <begin position="40"/>
        <end position="45"/>
    </location>
</feature>
<feature type="strand" evidence="9">
    <location>
        <begin position="51"/>
        <end position="53"/>
    </location>
</feature>
<feature type="helix" evidence="9">
    <location>
        <begin position="55"/>
        <end position="64"/>
    </location>
</feature>
<feature type="strand" evidence="9">
    <location>
        <begin position="66"/>
        <end position="73"/>
    </location>
</feature>
<feature type="helix" evidence="9">
    <location>
        <begin position="77"/>
        <end position="86"/>
    </location>
</feature>
<feature type="strand" evidence="9">
    <location>
        <begin position="89"/>
        <end position="93"/>
    </location>
</feature>
<feature type="turn" evidence="6">
    <location>
        <begin position="98"/>
        <end position="100"/>
    </location>
</feature>
<feature type="strand" evidence="8">
    <location>
        <begin position="103"/>
        <end position="105"/>
    </location>
</feature>
<feature type="helix" evidence="9">
    <location>
        <begin position="110"/>
        <end position="112"/>
    </location>
</feature>
<feature type="helix" evidence="9">
    <location>
        <begin position="113"/>
        <end position="125"/>
    </location>
</feature>
<feature type="strand" evidence="9">
    <location>
        <begin position="129"/>
        <end position="134"/>
    </location>
</feature>
<feature type="helix" evidence="9">
    <location>
        <begin position="138"/>
        <end position="146"/>
    </location>
</feature>
<feature type="strand" evidence="9">
    <location>
        <begin position="150"/>
        <end position="155"/>
    </location>
</feature>
<feature type="helix" evidence="9">
    <location>
        <begin position="157"/>
        <end position="161"/>
    </location>
</feature>
<feature type="helix" evidence="9">
    <location>
        <begin position="165"/>
        <end position="184"/>
    </location>
</feature>
<feature type="strand" evidence="9">
    <location>
        <begin position="188"/>
        <end position="194"/>
    </location>
</feature>
<feature type="turn" evidence="9">
    <location>
        <begin position="197"/>
        <end position="199"/>
    </location>
</feature>
<feature type="helix" evidence="9">
    <location>
        <begin position="200"/>
        <end position="204"/>
    </location>
</feature>
<feature type="strand" evidence="9">
    <location>
        <begin position="209"/>
        <end position="214"/>
    </location>
</feature>
<feature type="helix" evidence="9">
    <location>
        <begin position="216"/>
        <end position="225"/>
    </location>
</feature>
<feature type="helix" evidence="9">
    <location>
        <begin position="227"/>
        <end position="242"/>
    </location>
</feature>
<evidence type="ECO:0000269" key="1">
    <source>
    </source>
</evidence>
<evidence type="ECO:0000269" key="2">
    <source>
    </source>
</evidence>
<evidence type="ECO:0000269" key="3">
    <source>
    </source>
</evidence>
<evidence type="ECO:0000269" key="4">
    <source>
    </source>
</evidence>
<evidence type="ECO:0000305" key="5"/>
<evidence type="ECO:0007829" key="6">
    <source>
        <dbReference type="PDB" id="1HO1"/>
    </source>
</evidence>
<evidence type="ECO:0007829" key="7">
    <source>
        <dbReference type="PDB" id="1HO4"/>
    </source>
</evidence>
<evidence type="ECO:0007829" key="8">
    <source>
        <dbReference type="PDB" id="1IXP"/>
    </source>
</evidence>
<evidence type="ECO:0007829" key="9">
    <source>
        <dbReference type="PDB" id="1M5W"/>
    </source>
</evidence>
<comment type="function">
    <text evidence="1">Catalyzes the complicated ring closure reaction between the two acyclic compounds 1-deoxy-D-xylulose-5-phosphate (DXP) and 3-amino-2-oxopropyl phosphate (1-amino-acetone-3-phosphate or AAP) to form pyridoxine 5'-phosphate (PNP) and inorganic phosphate.</text>
</comment>
<comment type="catalytic activity">
    <reaction evidence="1">
        <text>3-amino-2-oxopropyl phosphate + 1-deoxy-D-xylulose 5-phosphate = pyridoxine 5'-phosphate + phosphate + 2 H2O + H(+)</text>
        <dbReference type="Rhea" id="RHEA:15265"/>
        <dbReference type="ChEBI" id="CHEBI:15377"/>
        <dbReference type="ChEBI" id="CHEBI:15378"/>
        <dbReference type="ChEBI" id="CHEBI:43474"/>
        <dbReference type="ChEBI" id="CHEBI:57279"/>
        <dbReference type="ChEBI" id="CHEBI:57792"/>
        <dbReference type="ChEBI" id="CHEBI:58589"/>
        <dbReference type="EC" id="2.6.99.2"/>
    </reaction>
</comment>
<comment type="pathway">
    <text evidence="1">Cofactor biosynthesis; pyridoxine 5'-phosphate biosynthesis; pyridoxine 5'-phosphate from D-erythrose 4-phosphate: step 5/5.</text>
</comment>
<comment type="subunit">
    <text evidence="2 3">Homooctamer; tetramer of dimers.</text>
</comment>
<comment type="subcellular location">
    <subcellularLocation>
        <location>Cytoplasm</location>
    </subcellularLocation>
</comment>
<comment type="similarity">
    <text evidence="5">Belongs to the PNP synthase family.</text>
</comment>
<comment type="sequence caution" evidence="5">
    <conflict type="frameshift">
        <sequence resource="EMBL" id="D64044"/>
    </conflict>
</comment>
<name>PDXJ_ECOLI</name>
<sequence length="243" mass="26384">MAELLLGVNIDHIATLRNARGTAYPDPVQAAFIAEQAGADGITVHLREDRRHITDRDVRILRQTLDTRMNLEMAVTEEMLAIAVETKPHFCCLVPEKRQEVTTEGGLDVAGQRDKMRDACKRLADAGIQVSLFIDADEEQIKAAAEVGAPFIEIHTGCYADAKTDAEQAQELARIAKAATFAASLGLKVNAGHGLTYHNVKAIAAIPEMHELNIGHAIIGRAVMTGLKDAVAEMKRLMLEARG</sequence>
<reference key="1">
    <citation type="journal article" date="1992" name="J. Bacteriol.">
        <title>Locating essential Escherichia coli genes by using mini-Tn10 transposons: the pdxJ operon.</title>
        <authorList>
            <person name="Takiff H.E."/>
            <person name="Baker T."/>
            <person name="Copeland T."/>
            <person name="Chen S.-M."/>
            <person name="Court D.L."/>
        </authorList>
    </citation>
    <scope>NUCLEOTIDE SEQUENCE [GENOMIC DNA]</scope>
    <scope>PARTIAL PROTEIN SEQUENCE</scope>
    <source>
        <strain>K12</strain>
    </source>
</reference>
<reference key="2">
    <citation type="journal article" date="1992" name="J. Bacteriol.">
        <title>Suppression of insertions in the complex pdxJ operon of Escherichia coli K-12 by lon and other mutations.</title>
        <authorList>
            <person name="Lam H.-M."/>
            <person name="Tancula E."/>
            <person name="Dempsey W.B."/>
            <person name="Winkler M.E."/>
        </authorList>
    </citation>
    <scope>NUCLEOTIDE SEQUENCE [GENOMIC DNA]</scope>
    <source>
        <strain>K12</strain>
    </source>
</reference>
<reference key="3">
    <citation type="submission" date="1995-09" db="EMBL/GenBank/DDBJ databases">
        <authorList>
            <person name="Nashimoto H."/>
            <person name="Saito N."/>
        </authorList>
    </citation>
    <scope>NUCLEOTIDE SEQUENCE [GENOMIC DNA]</scope>
    <source>
        <strain>K12</strain>
    </source>
</reference>
<reference key="4">
    <citation type="journal article" date="1997" name="Science">
        <title>The complete genome sequence of Escherichia coli K-12.</title>
        <authorList>
            <person name="Blattner F.R."/>
            <person name="Plunkett G. III"/>
            <person name="Bloch C.A."/>
            <person name="Perna N.T."/>
            <person name="Burland V."/>
            <person name="Riley M."/>
            <person name="Collado-Vides J."/>
            <person name="Glasner J.D."/>
            <person name="Rode C.K."/>
            <person name="Mayhew G.F."/>
            <person name="Gregor J."/>
            <person name="Davis N.W."/>
            <person name="Kirkpatrick H.A."/>
            <person name="Goeden M.A."/>
            <person name="Rose D.J."/>
            <person name="Mau B."/>
            <person name="Shao Y."/>
        </authorList>
    </citation>
    <scope>NUCLEOTIDE SEQUENCE [LARGE SCALE GENOMIC DNA]</scope>
    <source>
        <strain>K12 / MG1655 / ATCC 47076</strain>
    </source>
</reference>
<reference key="5">
    <citation type="journal article" date="2006" name="Mol. Syst. Biol.">
        <title>Highly accurate genome sequences of Escherichia coli K-12 strains MG1655 and W3110.</title>
        <authorList>
            <person name="Hayashi K."/>
            <person name="Morooka N."/>
            <person name="Yamamoto Y."/>
            <person name="Fujita K."/>
            <person name="Isono K."/>
            <person name="Choi S."/>
            <person name="Ohtsubo E."/>
            <person name="Baba T."/>
            <person name="Wanner B.L."/>
            <person name="Mori H."/>
            <person name="Horiuchi T."/>
        </authorList>
    </citation>
    <scope>NUCLEOTIDE SEQUENCE [LARGE SCALE GENOMIC DNA]</scope>
    <source>
        <strain>K12 / W3110 / ATCC 27325 / DSM 5911</strain>
    </source>
</reference>
<reference key="6">
    <citation type="journal article" date="1996" name="J. Bacteriol.">
        <title>Isolation of a pdxJ point mutation that bypasses the requirement for the PdxH oxidase in pyridoxal 5'-phosphate coenzyme biosynthesis in Escherichia coli K-12.</title>
        <authorList>
            <person name="Man T.K."/>
            <person name="Zhao G."/>
            <person name="Winkler M.E."/>
        </authorList>
    </citation>
    <scope>VARIANT SER-194</scope>
</reference>
<reference key="7">
    <citation type="journal article" date="1999" name="FEBS Lett.">
        <title>Vitamin B6 biosynthesis: formation of pyridoxine 5'-phosphate from 4-(phosphohydroxy)-L-threonine and 1-deoxy-D-xylulose-5-phosphate by PdxA and PdxJ protein.</title>
        <authorList>
            <person name="Laber B."/>
            <person name="Maurer W."/>
            <person name="Scharf S."/>
            <person name="Stepusin K."/>
            <person name="Schmidt F.S."/>
        </authorList>
    </citation>
    <scope>FUNCTION</scope>
    <scope>CATALYTIC ACTIVITY</scope>
    <source>
        <strain>K12 / ATCC 35607 / JM83</strain>
    </source>
</reference>
<reference key="8">
    <citation type="journal article" date="2000" name="Acta Crystallogr. D">
        <title>Crystallization and preliminary X-ray crystallographic analysis of PdxJ, the pyridoxine 5'-phosphate synthesizing enzyme.</title>
        <authorList>
            <person name="Garrido Franco M."/>
            <person name="Huber R."/>
            <person name="Schmidt F.S."/>
            <person name="Laber B."/>
            <person name="Clausen T."/>
        </authorList>
    </citation>
    <scope>CRYSTALLIZATION</scope>
</reference>
<reference key="9">
    <citation type="journal article" date="2003" name="Biochim. Biophys. Acta">
        <title>Pyridoxine 5'-phosphate synthase: de novo synthesis of vitamin B6 and beyond.</title>
        <authorList>
            <person name="Garrido-Franco M."/>
        </authorList>
    </citation>
    <scope>REVIEW</scope>
</reference>
<reference key="10">
    <citation type="journal article" date="2001" name="Structure">
        <title>Structural basis for the function of pyridoxine 5'-phosphate synthase.</title>
        <authorList>
            <person name="Garrido Franco M."/>
            <person name="Laber B."/>
            <person name="Huber R."/>
            <person name="Clausen T."/>
        </authorList>
    </citation>
    <scope>X-RAY CRYSTALLOGRAPHY (2.0 ANGSTROMS) IN COMPLEX WITH PRODUCT</scope>
    <scope>SUBUNIT</scope>
</reference>
<reference key="11">
    <citation type="journal article" date="2002" name="Biochemistry">
        <title>Multistate binding in pyridoxine 5'-phosphate synthase: 1.96 A crystal structure in complex with 1-deoxy-D-xylulose phosphate.</title>
        <authorList>
            <person name="Yeh J.I."/>
            <person name="Du S."/>
            <person name="Pohl E."/>
            <person name="Cane D.E."/>
        </authorList>
    </citation>
    <scope>X-RAY CRYSTALLOGRAPHY (1.96 ANGSTROMS) OF APOENZYME AND COMPLEX WITH SUBSTRATE</scope>
    <scope>SUBUNIT</scope>
</reference>
<reference key="12">
    <citation type="journal article" date="2002" name="J. Mol. Biol.">
        <title>Enzyme-ligand complexes of pyridoxine 5'-phosphate synthase: implications for substrate binding and catalysis.</title>
        <authorList>
            <person name="Garrido-Franco M."/>
            <person name="Laber B."/>
            <person name="Huber R."/>
            <person name="Clausen T."/>
        </authorList>
    </citation>
    <scope>X-RAY CRYSTALLOGRAPHY (2.3 ANGSTROMS) IN COMPLEXES WITH SUBSTRATE AND SUBSTRATE ANALOG</scope>
    <scope>REACTION MECHANISM</scope>
</reference>
<dbReference type="EC" id="2.6.99.2" evidence="1"/>
<dbReference type="EMBL" id="M76470">
    <property type="protein sequence ID" value="AAA21845.1"/>
    <property type="molecule type" value="Genomic_DNA"/>
</dbReference>
<dbReference type="EMBL" id="M74526">
    <property type="protein sequence ID" value="AAA24315.1"/>
    <property type="molecule type" value="Genomic_DNA"/>
</dbReference>
<dbReference type="EMBL" id="D64044">
    <property type="status" value="NOT_ANNOTATED_CDS"/>
    <property type="molecule type" value="Genomic_DNA"/>
</dbReference>
<dbReference type="EMBL" id="U36841">
    <property type="protein sequence ID" value="AAA79826.1"/>
    <property type="molecule type" value="Genomic_DNA"/>
</dbReference>
<dbReference type="EMBL" id="U00096">
    <property type="protein sequence ID" value="AAC75617.1"/>
    <property type="molecule type" value="Genomic_DNA"/>
</dbReference>
<dbReference type="EMBL" id="AP009048">
    <property type="protein sequence ID" value="BAE76740.1"/>
    <property type="molecule type" value="Genomic_DNA"/>
</dbReference>
<dbReference type="PIR" id="A42293">
    <property type="entry name" value="A42293"/>
</dbReference>
<dbReference type="RefSeq" id="NP_417059.1">
    <property type="nucleotide sequence ID" value="NC_000913.3"/>
</dbReference>
<dbReference type="RefSeq" id="WP_001297412.1">
    <property type="nucleotide sequence ID" value="NZ_STEB01000011.1"/>
</dbReference>
<dbReference type="PDB" id="1HO1">
    <property type="method" value="X-ray"/>
    <property type="resolution" value="2.00 A"/>
    <property type="chains" value="A/B/C/D=2-243"/>
</dbReference>
<dbReference type="PDB" id="1HO4">
    <property type="method" value="X-ray"/>
    <property type="resolution" value="2.30 A"/>
    <property type="chains" value="A/B/C/D=2-243"/>
</dbReference>
<dbReference type="PDB" id="1IXN">
    <property type="method" value="X-ray"/>
    <property type="resolution" value="2.30 A"/>
    <property type="chains" value="A/B/C/D=2-243"/>
</dbReference>
<dbReference type="PDB" id="1IXO">
    <property type="method" value="X-ray"/>
    <property type="resolution" value="2.30 A"/>
    <property type="chains" value="A/B/C/D=2-243"/>
</dbReference>
<dbReference type="PDB" id="1IXP">
    <property type="method" value="X-ray"/>
    <property type="resolution" value="2.30 A"/>
    <property type="chains" value="A/B/C/D=2-243"/>
</dbReference>
<dbReference type="PDB" id="1IXQ">
    <property type="method" value="X-ray"/>
    <property type="resolution" value="2.30 A"/>
    <property type="chains" value="A/B/C/D=2-243"/>
</dbReference>
<dbReference type="PDB" id="1M5W">
    <property type="method" value="X-ray"/>
    <property type="resolution" value="1.96 A"/>
    <property type="chains" value="A/B/C/D/E/F/G/H=1-243"/>
</dbReference>
<dbReference type="PDB" id="6RG0">
    <property type="method" value="X-ray"/>
    <property type="resolution" value="3.07 A"/>
    <property type="chains" value="A/B/C/D=2-243"/>
</dbReference>
<dbReference type="PDBsum" id="1HO1"/>
<dbReference type="PDBsum" id="1HO4"/>
<dbReference type="PDBsum" id="1IXN"/>
<dbReference type="PDBsum" id="1IXO"/>
<dbReference type="PDBsum" id="1IXP"/>
<dbReference type="PDBsum" id="1IXQ"/>
<dbReference type="PDBsum" id="1M5W"/>
<dbReference type="PDBsum" id="6RG0"/>
<dbReference type="SMR" id="P0A794"/>
<dbReference type="BioGRID" id="4260601">
    <property type="interactions" value="36"/>
</dbReference>
<dbReference type="DIP" id="DIP-36215N"/>
<dbReference type="FunCoup" id="P0A794">
    <property type="interactions" value="473"/>
</dbReference>
<dbReference type="IntAct" id="P0A794">
    <property type="interactions" value="5"/>
</dbReference>
<dbReference type="STRING" id="511145.b2564"/>
<dbReference type="DrugBank" id="DB02496">
    <property type="generic name" value="1-Deoxy-D-xylulose 5-phosphate"/>
</dbReference>
<dbReference type="DrugBank" id="DB02209">
    <property type="generic name" value="Pyridoxine phosphate"/>
</dbReference>
<dbReference type="DrugBank" id="DB02515">
    <property type="generic name" value="sn-glycerol 3-phosphate"/>
</dbReference>
<dbReference type="jPOST" id="P0A794"/>
<dbReference type="PaxDb" id="511145-b2564"/>
<dbReference type="EnsemblBacteria" id="AAC75617">
    <property type="protein sequence ID" value="AAC75617"/>
    <property type="gene ID" value="b2564"/>
</dbReference>
<dbReference type="GeneID" id="86860685"/>
<dbReference type="GeneID" id="947039"/>
<dbReference type="KEGG" id="ecj:JW2548"/>
<dbReference type="KEGG" id="eco:b2564"/>
<dbReference type="KEGG" id="ecoc:C3026_14205"/>
<dbReference type="PATRIC" id="fig|1411691.4.peg.4170"/>
<dbReference type="EchoBASE" id="EB0687"/>
<dbReference type="eggNOG" id="COG0854">
    <property type="taxonomic scope" value="Bacteria"/>
</dbReference>
<dbReference type="HOGENOM" id="CLU_074563_0_0_6"/>
<dbReference type="InParanoid" id="P0A794"/>
<dbReference type="OMA" id="ERHIRYQ"/>
<dbReference type="OrthoDB" id="9806590at2"/>
<dbReference type="PhylomeDB" id="P0A794"/>
<dbReference type="BioCyc" id="EcoCyc:PDXJ-MONOMER"/>
<dbReference type="BioCyc" id="MetaCyc:PDXJ-MONOMER"/>
<dbReference type="BRENDA" id="2.6.99.2">
    <property type="organism ID" value="2026"/>
</dbReference>
<dbReference type="UniPathway" id="UPA00244">
    <property type="reaction ID" value="UER00313"/>
</dbReference>
<dbReference type="EvolutionaryTrace" id="P0A794"/>
<dbReference type="PRO" id="PR:P0A794"/>
<dbReference type="Proteomes" id="UP000000625">
    <property type="component" value="Chromosome"/>
</dbReference>
<dbReference type="GO" id="GO:0005829">
    <property type="term" value="C:cytosol"/>
    <property type="evidence" value="ECO:0000314"/>
    <property type="project" value="EcoCyc"/>
</dbReference>
<dbReference type="GO" id="GO:0042802">
    <property type="term" value="F:identical protein binding"/>
    <property type="evidence" value="ECO:0000314"/>
    <property type="project" value="EcoCyc"/>
</dbReference>
<dbReference type="GO" id="GO:0033856">
    <property type="term" value="F:pyridoxine 5'-phosphate synthase activity"/>
    <property type="evidence" value="ECO:0000314"/>
    <property type="project" value="EcoCyc"/>
</dbReference>
<dbReference type="GO" id="GO:0008615">
    <property type="term" value="P:pyridoxine biosynthetic process"/>
    <property type="evidence" value="ECO:0000315"/>
    <property type="project" value="EcoliWiki"/>
</dbReference>
<dbReference type="CDD" id="cd00003">
    <property type="entry name" value="PNPsynthase"/>
    <property type="match status" value="1"/>
</dbReference>
<dbReference type="FunFam" id="3.20.20.70:FF:000042">
    <property type="entry name" value="Pyridoxine 5'-phosphate synthase"/>
    <property type="match status" value="1"/>
</dbReference>
<dbReference type="Gene3D" id="3.20.20.70">
    <property type="entry name" value="Aldolase class I"/>
    <property type="match status" value="1"/>
</dbReference>
<dbReference type="HAMAP" id="MF_00279">
    <property type="entry name" value="PdxJ"/>
    <property type="match status" value="1"/>
</dbReference>
<dbReference type="InterPro" id="IPR013785">
    <property type="entry name" value="Aldolase_TIM"/>
</dbReference>
<dbReference type="InterPro" id="IPR004569">
    <property type="entry name" value="PyrdxlP_synth_PdxJ"/>
</dbReference>
<dbReference type="InterPro" id="IPR036130">
    <property type="entry name" value="Pyridoxine-5'_phos_synth"/>
</dbReference>
<dbReference type="NCBIfam" id="TIGR00559">
    <property type="entry name" value="pdxJ"/>
    <property type="match status" value="1"/>
</dbReference>
<dbReference type="NCBIfam" id="NF003623">
    <property type="entry name" value="PRK05265.1-1"/>
    <property type="match status" value="1"/>
</dbReference>
<dbReference type="NCBIfam" id="NF003624">
    <property type="entry name" value="PRK05265.1-2"/>
    <property type="match status" value="1"/>
</dbReference>
<dbReference type="NCBIfam" id="NF003625">
    <property type="entry name" value="PRK05265.1-3"/>
    <property type="match status" value="1"/>
</dbReference>
<dbReference type="NCBIfam" id="NF003626">
    <property type="entry name" value="PRK05265.1-4"/>
    <property type="match status" value="1"/>
</dbReference>
<dbReference type="NCBIfam" id="NF003627">
    <property type="entry name" value="PRK05265.1-5"/>
    <property type="match status" value="1"/>
</dbReference>
<dbReference type="PANTHER" id="PTHR30456">
    <property type="entry name" value="PYRIDOXINE 5'-PHOSPHATE SYNTHASE"/>
    <property type="match status" value="1"/>
</dbReference>
<dbReference type="PANTHER" id="PTHR30456:SF0">
    <property type="entry name" value="PYRIDOXINE 5'-PHOSPHATE SYNTHASE"/>
    <property type="match status" value="1"/>
</dbReference>
<dbReference type="Pfam" id="PF03740">
    <property type="entry name" value="PdxJ"/>
    <property type="match status" value="1"/>
</dbReference>
<dbReference type="SUPFAM" id="SSF63892">
    <property type="entry name" value="Pyridoxine 5'-phosphate synthase"/>
    <property type="match status" value="1"/>
</dbReference>
<organism>
    <name type="scientific">Escherichia coli (strain K12)</name>
    <dbReference type="NCBI Taxonomy" id="83333"/>
    <lineage>
        <taxon>Bacteria</taxon>
        <taxon>Pseudomonadati</taxon>
        <taxon>Pseudomonadota</taxon>
        <taxon>Gammaproteobacteria</taxon>
        <taxon>Enterobacterales</taxon>
        <taxon>Enterobacteriaceae</taxon>
        <taxon>Escherichia</taxon>
    </lineage>
</organism>